<proteinExistence type="inferred from homology"/>
<dbReference type="EMBL" id="K02562">
    <property type="protein sequence ID" value="AAA47060.2"/>
    <property type="molecule type" value="Genomic_DNA"/>
</dbReference>
<dbReference type="EMBL" id="K02562">
    <property type="protein sequence ID" value="AAA47061.2"/>
    <property type="molecule type" value="Genomic_DNA"/>
</dbReference>
<dbReference type="EMBL" id="M30540">
    <property type="protein sequence ID" value="AAA47069.1"/>
    <property type="molecule type" value="Genomic_DNA"/>
</dbReference>
<dbReference type="PIR" id="A03634">
    <property type="entry name" value="VVVP2L"/>
</dbReference>
<dbReference type="RefSeq" id="NP_848005.2">
    <property type="nucleotide sequence ID" value="NC_004763.2"/>
</dbReference>
<dbReference type="RefSeq" id="NP_848006.2">
    <property type="nucleotide sequence ID" value="NC_004763.2"/>
</dbReference>
<dbReference type="GeneID" id="1494436"/>
<dbReference type="GeneID" id="1494440"/>
<dbReference type="KEGG" id="vg:1494436"/>
<dbReference type="KEGG" id="vg:1494440"/>
<dbReference type="Proteomes" id="UP000126011">
    <property type="component" value="Segment"/>
</dbReference>
<dbReference type="Proteomes" id="UP000173801">
    <property type="component" value="Segment"/>
</dbReference>
<dbReference type="GO" id="GO:0043657">
    <property type="term" value="C:host cell"/>
    <property type="evidence" value="ECO:0007669"/>
    <property type="project" value="GOC"/>
</dbReference>
<dbReference type="GO" id="GO:0044167">
    <property type="term" value="C:host cell endoplasmic reticulum membrane"/>
    <property type="evidence" value="ECO:0007669"/>
    <property type="project" value="UniProtKB-SubCell"/>
</dbReference>
<dbReference type="GO" id="GO:0042025">
    <property type="term" value="C:host cell nucleus"/>
    <property type="evidence" value="ECO:0007669"/>
    <property type="project" value="UniProtKB-SubCell"/>
</dbReference>
<dbReference type="GO" id="GO:0016020">
    <property type="term" value="C:membrane"/>
    <property type="evidence" value="ECO:0007669"/>
    <property type="project" value="UniProtKB-KW"/>
</dbReference>
<dbReference type="GO" id="GO:0019028">
    <property type="term" value="C:viral capsid"/>
    <property type="evidence" value="ECO:0007669"/>
    <property type="project" value="UniProtKB-KW"/>
</dbReference>
<dbReference type="GO" id="GO:0003677">
    <property type="term" value="F:DNA binding"/>
    <property type="evidence" value="ECO:0007669"/>
    <property type="project" value="UniProtKB-KW"/>
</dbReference>
<dbReference type="GO" id="GO:0005198">
    <property type="term" value="F:structural molecule activity"/>
    <property type="evidence" value="ECO:0007669"/>
    <property type="project" value="InterPro"/>
</dbReference>
<dbReference type="GO" id="GO:0046718">
    <property type="term" value="P:symbiont entry into host cell"/>
    <property type="evidence" value="ECO:0007669"/>
    <property type="project" value="UniProtKB-KW"/>
</dbReference>
<dbReference type="GO" id="GO:0075732">
    <property type="term" value="P:viral penetration into host nucleus"/>
    <property type="evidence" value="ECO:0007669"/>
    <property type="project" value="UniProtKB-KW"/>
</dbReference>
<dbReference type="InterPro" id="IPR001070">
    <property type="entry name" value="Polyoma_coat_VP2"/>
</dbReference>
<dbReference type="Pfam" id="PF00761">
    <property type="entry name" value="Polyoma_coat2"/>
    <property type="match status" value="1"/>
</dbReference>
<dbReference type="PIRSF" id="PIRSF003377">
    <property type="entry name" value="Polyoma_coat2"/>
    <property type="match status" value="1"/>
</dbReference>
<evidence type="ECO:0000250" key="1"/>
<evidence type="ECO:0000255" key="2"/>
<evidence type="ECO:0000256" key="3">
    <source>
        <dbReference type="SAM" id="MobiDB-lite"/>
    </source>
</evidence>
<evidence type="ECO:0000305" key="4"/>
<accession>P04011</accession>
<accession>Q84182</accession>
<feature type="initiator methionine" description="Removed; by host" evidence="1">
    <location>
        <position position="1"/>
    </location>
</feature>
<feature type="chain" id="PRO_0000039213" description="Minor capsid protein VP2">
    <location>
        <begin position="2"/>
        <end position="356"/>
    </location>
</feature>
<feature type="transmembrane region" description="Helical" evidence="2">
    <location>
        <begin position="289"/>
        <end position="309"/>
    </location>
</feature>
<feature type="region of interest" description="Disordered" evidence="3">
    <location>
        <begin position="233"/>
        <end position="267"/>
    </location>
</feature>
<feature type="region of interest" description="D1" evidence="1">
    <location>
        <begin position="268"/>
        <end position="303"/>
    </location>
</feature>
<feature type="region of interest" description="DNA-binding" evidence="1">
    <location>
        <begin position="308"/>
        <end position="354"/>
    </location>
</feature>
<feature type="region of interest" description="Disordered" evidence="3">
    <location>
        <begin position="312"/>
        <end position="356"/>
    </location>
</feature>
<feature type="short sequence motif" description="Nuclear localization signal" evidence="1">
    <location>
        <begin position="320"/>
        <end position="326"/>
    </location>
</feature>
<feature type="compositionally biased region" description="Basic and acidic residues" evidence="3">
    <location>
        <begin position="244"/>
        <end position="267"/>
    </location>
</feature>
<feature type="compositionally biased region" description="Polar residues" evidence="3">
    <location>
        <begin position="329"/>
        <end position="340"/>
    </location>
</feature>
<feature type="compositionally biased region" description="Basic residues" evidence="3">
    <location>
        <begin position="343"/>
        <end position="356"/>
    </location>
</feature>
<feature type="lipid moiety-binding region" description="N-myristoyl glycine; by host" evidence="1">
    <location>
        <position position="2"/>
    </location>
</feature>
<feature type="splice variant" id="VSP_018920" description="In isoform VP3." evidence="4">
    <location>
        <begin position="1"/>
        <end position="119"/>
    </location>
</feature>
<name>VP2_POVLY</name>
<protein>
    <recommendedName>
        <fullName>Minor capsid protein VP2</fullName>
    </recommendedName>
    <alternativeName>
        <fullName>Minor structural protein VP2</fullName>
    </alternativeName>
</protein>
<organism>
    <name type="scientific">B-lymphotropic polyomavirus</name>
    <name type="common">LPV</name>
    <dbReference type="NCBI Taxonomy" id="332091"/>
    <lineage>
        <taxon>Viruses</taxon>
        <taxon>Monodnaviria</taxon>
        <taxon>Shotokuvirae</taxon>
        <taxon>Cossaviricota</taxon>
        <taxon>Papovaviricetes</taxon>
        <taxon>Sepolyvirales</taxon>
        <taxon>Polyomaviridae</taxon>
        <taxon>African green monkey polyomavirus</taxon>
    </lineage>
</organism>
<keyword id="KW-0024">Alternative initiation</keyword>
<keyword id="KW-0025">Alternative splicing</keyword>
<keyword id="KW-0167">Capsid protein</keyword>
<keyword id="KW-0238">DNA-binding</keyword>
<keyword id="KW-1038">Host endoplasmic reticulum</keyword>
<keyword id="KW-1043">Host membrane</keyword>
<keyword id="KW-1048">Host nucleus</keyword>
<keyword id="KW-0426">Late protein</keyword>
<keyword id="KW-0449">Lipoprotein</keyword>
<keyword id="KW-0472">Membrane</keyword>
<keyword id="KW-0519">Myristate</keyword>
<keyword id="KW-1185">Reference proteome</keyword>
<keyword id="KW-0812">Transmembrane</keyword>
<keyword id="KW-1133">Transmembrane helix</keyword>
<keyword id="KW-1163">Viral penetration into host nucleus</keyword>
<keyword id="KW-0946">Virion</keyword>
<keyword id="KW-1160">Virus entry into host cell</keyword>
<organismHost>
    <name type="scientific">Chlorocebus aethiops</name>
    <name type="common">Green monkey</name>
    <name type="synonym">Cercopithecus aethiops</name>
    <dbReference type="NCBI Taxonomy" id="9534"/>
</organismHost>
<comment type="function">
    <molecule>Isoform VP2</molecule>
    <text evidence="1">Structural protein that resides within the core of the capsid surrounded by 72 VP1 pentamers. Participates in host cell receptor binding together with VP1. Following virus endocytosis and trafficking to the endoplasmic reticulum, VP2 and VP3 form oligomers and integrate into the endoplasmic reticulum membrane. Heterooligomer VP2-VP3 may create a viroporin for transporting the viral genome across the endoplasmic reticulum membrane to the cytoplasm. Nuclear entry of the viral DNA involves the selective exposure and importin recognition of VP2 or VP3 nuclear localization signal (shared C-terminus). Plays a role in virion assembly within the nucleus in particular through a DNA-binding domain located in the C-terminal region. A N-terminal myristoylation suggests a scaffold function for virion assembly. The viral progenies exit the cells by lytic release (By similarity).</text>
</comment>
<comment type="function">
    <molecule>Isoform VP3</molecule>
    <text evidence="1">Structural protein that resides within the core of the capsid surrounded by 72 VP1 pentamers. Following virus endocytosis and trafficking to the endoplasmic reticulum, VP2 and VP3 form oligomers and integrate into the endoplasmic reticulum membrane. Heterooligomer VP2-VP3 may create a viroporin for transporting the viral genome across the endoplasmic reticulum membrane to the cytoplasm. Nuclear entry of the viral DNA involves the selective exposure and importin recognition of VP2 or VP3 nuclear localization signal (shared C-terminus). Plays a role in virion assembly within the nucleus (By similarity).</text>
</comment>
<comment type="subunit">
    <molecule>Isoform VP2</molecule>
    <text evidence="1">Forms homooligomers, and heterooligomers with VP3 in the endoplasmic reticulum membrane. Interacts (via D1 domain) with VP1.</text>
</comment>
<comment type="subunit">
    <molecule>Isoform VP3</molecule>
    <text>Interacts (via D1 domain) with VP1.</text>
</comment>
<comment type="subcellular location">
    <molecule>Isoform VP2</molecule>
    <subcellularLocation>
        <location>Virion</location>
    </subcellularLocation>
    <subcellularLocation>
        <location>Host nucleus</location>
    </subcellularLocation>
    <subcellularLocation>
        <location>Host endoplasmic reticulum</location>
    </subcellularLocation>
    <subcellularLocation>
        <location evidence="1">Host endoplasmic reticulum membrane</location>
    </subcellularLocation>
</comment>
<comment type="subcellular location">
    <molecule>Isoform VP3</molecule>
    <subcellularLocation>
        <location>Virion</location>
    </subcellularLocation>
    <subcellularLocation>
        <location>Host nucleus</location>
    </subcellularLocation>
    <subcellularLocation>
        <location>Host endoplasmic reticulum</location>
    </subcellularLocation>
    <subcellularLocation>
        <location evidence="1">Host endoplasmic reticulum membrane</location>
    </subcellularLocation>
</comment>
<comment type="alternative products">
    <event type="alternative splicing"/>
    <event type="alternative initiation"/>
    <isoform>
        <id>P04011-1</id>
        <name>VP2</name>
        <name>Minor capsid protein VP2</name>
        <sequence type="displayed"/>
    </isoform>
    <isoform>
        <id>P04011-2</id>
        <name>VP3</name>
        <name>Minor capsid protein VP3</name>
        <sequence type="described" ref="VSP_018920"/>
    </isoform>
    <isoform>
        <id>P04010-1</id>
        <name>VP1</name>
        <sequence type="external"/>
    </isoform>
</comment>
<comment type="miscellaneous">
    <molecule>Isoform VP2</molecule>
    <text>Produced by alternative splicing of the late mRNA.</text>
</comment>
<comment type="miscellaneous">
    <molecule>Isoform VP3</molecule>
    <text evidence="4">Produced by alternative initiation at Met-120 of isoform VP2.</text>
</comment>
<comment type="similarity">
    <text evidence="4">Belongs to the polyomaviruses capsid protein VP2 family.</text>
</comment>
<reference key="1">
    <citation type="journal article" date="1985" name="Virology">
        <title>Complete DNA sequence of lymphotropic papovavirus: prototype of a new species of the polyomavirus genus.</title>
        <authorList>
            <person name="Pawlita M."/>
            <person name="Clad A."/>
            <person name="zur Hausen H."/>
        </authorList>
    </citation>
    <scope>NUCLEOTIDE SEQUENCE [GENOMIC DNA]</scope>
</reference>
<reference key="2">
    <citation type="submission" date="2013-08" db="EMBL/GenBank/DDBJ databases">
        <authorList>
            <person name="Pawlita M."/>
            <person name="Clad A."/>
            <person name="zur Hausen H."/>
        </authorList>
    </citation>
    <scope>SEQUENCE REVISION</scope>
</reference>
<reference key="3">
    <citation type="journal article" date="1986" name="Jpn. J. Med. Sci. Biol.">
        <title>Monkey B-lymphotropic papovavirus genome: the entire DNA sequence and variable regions.</title>
        <authorList>
            <person name="Furuno A."/>
            <person name="Kanda T."/>
            <person name="Yoshiike K."/>
        </authorList>
    </citation>
    <scope>NUCLEOTIDE SEQUENCE [GENOMIC DNA]</scope>
</reference>
<reference key="4">
    <citation type="journal article" date="2009" name="Virology">
        <title>The Polyomaviridae: Contributions of virus structure to our understanding of virus receptors and infectious entry.</title>
        <authorList>
            <person name="Neu U."/>
            <person name="Stehle T."/>
            <person name="Atwood W.J."/>
        </authorList>
    </citation>
    <scope>REVIEW</scope>
</reference>
<sequence>MGGVLSLLFNISEIAAELSLSTGFTVDAILTGEAFAAVSTEAAWLIEIEAVDLAGLSTLEALSLTGLTTEQFSLLSAIPTALNNAIGIGVFFQTVSGASAVVAAGVTTFGYSKEVPVVNMALVPWFPQVDYLFPGFTSFSYYLNAVLDWGESLFHAVGREVWRHLMRQATLQIGQATRAVAVRSTNELSHTLAQIAENARWALTSGPVHIYSSVQDYYRYLPARNPIQLRQEYRNRGEPPPSRADFEYQENREGQRARRELGYDEPRSGQYVEHYTAPGGAHQRVTQDWMLPLILGLYGDITPTWEVELNKLEKEEDGPSKKKARRSMQKNMPYSRSRPQAPSKRRSRGARSKNRA</sequence>